<organism>
    <name type="scientific">Brachyspira hyodysenteriae (strain ATCC 49526 / WA1)</name>
    <dbReference type="NCBI Taxonomy" id="565034"/>
    <lineage>
        <taxon>Bacteria</taxon>
        <taxon>Pseudomonadati</taxon>
        <taxon>Spirochaetota</taxon>
        <taxon>Spirochaetia</taxon>
        <taxon>Brachyspirales</taxon>
        <taxon>Brachyspiraceae</taxon>
        <taxon>Brachyspira</taxon>
    </lineage>
</organism>
<gene>
    <name evidence="1" type="primary">uxaC</name>
    <name type="ordered locus">BHWA1_02239</name>
</gene>
<comment type="catalytic activity">
    <reaction evidence="1">
        <text>D-glucuronate = D-fructuronate</text>
        <dbReference type="Rhea" id="RHEA:13049"/>
        <dbReference type="ChEBI" id="CHEBI:58720"/>
        <dbReference type="ChEBI" id="CHEBI:59863"/>
        <dbReference type="EC" id="5.3.1.12"/>
    </reaction>
</comment>
<comment type="catalytic activity">
    <reaction evidence="1">
        <text>aldehydo-D-galacturonate = keto-D-tagaturonate</text>
        <dbReference type="Rhea" id="RHEA:27702"/>
        <dbReference type="ChEBI" id="CHEBI:12952"/>
        <dbReference type="ChEBI" id="CHEBI:17886"/>
        <dbReference type="EC" id="5.3.1.12"/>
    </reaction>
</comment>
<comment type="pathway">
    <text evidence="1">Carbohydrate metabolism; pentose and glucuronate interconversion.</text>
</comment>
<comment type="similarity">
    <text evidence="1">Belongs to the metallo-dependent hydrolases superfamily. Uronate isomerase family.</text>
</comment>
<protein>
    <recommendedName>
        <fullName evidence="1">Uronate isomerase</fullName>
        <ecNumber evidence="1">5.3.1.12</ecNumber>
    </recommendedName>
    <alternativeName>
        <fullName evidence="1">Glucuronate isomerase</fullName>
    </alternativeName>
    <alternativeName>
        <fullName evidence="1">Uronic isomerase</fullName>
    </alternativeName>
</protein>
<accession>C0QWA9</accession>
<feature type="chain" id="PRO_1000147686" description="Uronate isomerase">
    <location>
        <begin position="1"/>
        <end position="468"/>
    </location>
</feature>
<sequence>MKTFMDKDFLLYNETAKTLFYNYACKCPIFDYHCHLNPKEIAENKKFKNITEIWLYGDHYKWRMMRANGIDEKFITGDASDYDKFIAWVKTVPNLIGNPLYHWSHLELQRYFDIHEVINEDNADTIWEKANQKLQNMTVKDILKKFKVHTIGTTDDPTDNLEYHKLINEGKAQIGKIYTKVVPSFRPDKAINIEMPDFSDYIKKLENASKINIKDINSLTEALYNRIDYFKSLGCVSSDCSLSIVPFNLDDEKNIDAIFKKAMNKESLNFEDIEKYKTYILIKLIKKYKESNLVMQIHISAMRNNNEVMFKKLGADTGYDSVGDSNIIEKLSFLLKTANNDGGLPKIIFYSLNHKDYYPLSTLMGCFQEGSIKGKMQLGSAWWFCDNRDGMEEQIKILANTGSLALFVGMLTDSRSFLSYSRHEYFRRILCNIIGEWADKGEVPNDIKYLGSIIENICFNNSNIYFNN</sequence>
<dbReference type="EC" id="5.3.1.12" evidence="1"/>
<dbReference type="EMBL" id="CP001357">
    <property type="protein sequence ID" value="ACN84695.1"/>
    <property type="molecule type" value="Genomic_DNA"/>
</dbReference>
<dbReference type="RefSeq" id="WP_012671727.1">
    <property type="nucleotide sequence ID" value="NC_012225.1"/>
</dbReference>
<dbReference type="SMR" id="C0QWA9"/>
<dbReference type="STRING" id="565034.BHWA1_02239"/>
<dbReference type="GeneID" id="63963393"/>
<dbReference type="KEGG" id="bhy:BHWA1_02239"/>
<dbReference type="eggNOG" id="COG1904">
    <property type="taxonomic scope" value="Bacteria"/>
</dbReference>
<dbReference type="HOGENOM" id="CLU_044465_1_0_12"/>
<dbReference type="UniPathway" id="UPA00246"/>
<dbReference type="Proteomes" id="UP000001803">
    <property type="component" value="Chromosome"/>
</dbReference>
<dbReference type="GO" id="GO:0008880">
    <property type="term" value="F:glucuronate isomerase activity"/>
    <property type="evidence" value="ECO:0007669"/>
    <property type="project" value="UniProtKB-UniRule"/>
</dbReference>
<dbReference type="GO" id="GO:0019698">
    <property type="term" value="P:D-galacturonate catabolic process"/>
    <property type="evidence" value="ECO:0007669"/>
    <property type="project" value="TreeGrafter"/>
</dbReference>
<dbReference type="GO" id="GO:0042840">
    <property type="term" value="P:D-glucuronate catabolic process"/>
    <property type="evidence" value="ECO:0007669"/>
    <property type="project" value="TreeGrafter"/>
</dbReference>
<dbReference type="Gene3D" id="3.20.20.140">
    <property type="entry name" value="Metal-dependent hydrolases"/>
    <property type="match status" value="1"/>
</dbReference>
<dbReference type="Gene3D" id="1.10.2020.10">
    <property type="entry name" value="uronate isomerase, domain 2, chain A"/>
    <property type="match status" value="1"/>
</dbReference>
<dbReference type="HAMAP" id="MF_00675">
    <property type="entry name" value="UxaC"/>
    <property type="match status" value="1"/>
</dbReference>
<dbReference type="InterPro" id="IPR032466">
    <property type="entry name" value="Metal_Hydrolase"/>
</dbReference>
<dbReference type="InterPro" id="IPR003766">
    <property type="entry name" value="Uronate_isomerase"/>
</dbReference>
<dbReference type="NCBIfam" id="NF002794">
    <property type="entry name" value="PRK02925.1"/>
    <property type="match status" value="1"/>
</dbReference>
<dbReference type="PANTHER" id="PTHR30068">
    <property type="entry name" value="URONATE ISOMERASE"/>
    <property type="match status" value="1"/>
</dbReference>
<dbReference type="PANTHER" id="PTHR30068:SF4">
    <property type="entry name" value="URONATE ISOMERASE"/>
    <property type="match status" value="1"/>
</dbReference>
<dbReference type="Pfam" id="PF02614">
    <property type="entry name" value="UxaC"/>
    <property type="match status" value="1"/>
</dbReference>
<dbReference type="SUPFAM" id="SSF51556">
    <property type="entry name" value="Metallo-dependent hydrolases"/>
    <property type="match status" value="1"/>
</dbReference>
<name>UXAC_BRAHW</name>
<proteinExistence type="inferred from homology"/>
<reference key="1">
    <citation type="journal article" date="2009" name="PLoS ONE">
        <title>Genome sequence of the pathogenic intestinal spirochete Brachyspira hyodysenteriae reveals adaptations to its lifestyle in the porcine large intestine.</title>
        <authorList>
            <person name="Bellgard M.I."/>
            <person name="Wanchanthuek P."/>
            <person name="La T."/>
            <person name="Ryan K."/>
            <person name="Moolhuijzen P."/>
            <person name="Albertyn Z."/>
            <person name="Shaban B."/>
            <person name="Motro Y."/>
            <person name="Dunn D.S."/>
            <person name="Schibeci D."/>
            <person name="Hunter A."/>
            <person name="Barrero R."/>
            <person name="Phillips N.D."/>
            <person name="Hampson D.J."/>
        </authorList>
    </citation>
    <scope>NUCLEOTIDE SEQUENCE [LARGE SCALE GENOMIC DNA]</scope>
    <source>
        <strain>ATCC 49526 / WA1</strain>
    </source>
</reference>
<evidence type="ECO:0000255" key="1">
    <source>
        <dbReference type="HAMAP-Rule" id="MF_00675"/>
    </source>
</evidence>
<keyword id="KW-0413">Isomerase</keyword>